<keyword id="KW-0963">Cytoplasm</keyword>
<keyword id="KW-0378">Hydrolase</keyword>
<keyword id="KW-0479">Metal-binding</keyword>
<keyword id="KW-0547">Nucleotide-binding</keyword>
<comment type="function">
    <text evidence="1">Nucleotidase with a broad substrate specificity as it can dephosphorylate various ribo- and deoxyribonucleoside 5'-monophosphates and ribonucleoside 3'-monophosphates with highest affinity to 3'-AMP. Also hydrolyzes polyphosphate (exopolyphosphatase activity) with the preference for short-chain-length substrates (P20-25). Might be involved in the regulation of dNTP and NTP pools, and in the turnover of 3'-mononucleotides produced by numerous intracellular RNases (T1, T2, and F) during the degradation of various RNAs.</text>
</comment>
<comment type="catalytic activity">
    <reaction evidence="1">
        <text>a ribonucleoside 5'-phosphate + H2O = a ribonucleoside + phosphate</text>
        <dbReference type="Rhea" id="RHEA:12484"/>
        <dbReference type="ChEBI" id="CHEBI:15377"/>
        <dbReference type="ChEBI" id="CHEBI:18254"/>
        <dbReference type="ChEBI" id="CHEBI:43474"/>
        <dbReference type="ChEBI" id="CHEBI:58043"/>
        <dbReference type="EC" id="3.1.3.5"/>
    </reaction>
</comment>
<comment type="catalytic activity">
    <reaction evidence="1">
        <text>a ribonucleoside 3'-phosphate + H2O = a ribonucleoside + phosphate</text>
        <dbReference type="Rhea" id="RHEA:10144"/>
        <dbReference type="ChEBI" id="CHEBI:13197"/>
        <dbReference type="ChEBI" id="CHEBI:15377"/>
        <dbReference type="ChEBI" id="CHEBI:18254"/>
        <dbReference type="ChEBI" id="CHEBI:43474"/>
        <dbReference type="EC" id="3.1.3.6"/>
    </reaction>
</comment>
<comment type="catalytic activity">
    <reaction evidence="1">
        <text>[phosphate](n) + H2O = [phosphate](n-1) + phosphate + H(+)</text>
        <dbReference type="Rhea" id="RHEA:21528"/>
        <dbReference type="Rhea" id="RHEA-COMP:9859"/>
        <dbReference type="Rhea" id="RHEA-COMP:14279"/>
        <dbReference type="ChEBI" id="CHEBI:15377"/>
        <dbReference type="ChEBI" id="CHEBI:15378"/>
        <dbReference type="ChEBI" id="CHEBI:16838"/>
        <dbReference type="ChEBI" id="CHEBI:43474"/>
        <dbReference type="EC" id="3.6.1.11"/>
    </reaction>
</comment>
<comment type="cofactor">
    <cofactor evidence="1">
        <name>a divalent metal cation</name>
        <dbReference type="ChEBI" id="CHEBI:60240"/>
    </cofactor>
    <text evidence="1">Binds 1 divalent metal cation per subunit.</text>
</comment>
<comment type="subcellular location">
    <subcellularLocation>
        <location evidence="1">Cytoplasm</location>
    </subcellularLocation>
</comment>
<comment type="similarity">
    <text evidence="1">Belongs to the SurE nucleotidase family.</text>
</comment>
<feature type="chain" id="PRO_1000196604" description="5'/3'-nucleotidase SurE">
    <location>
        <begin position="1"/>
        <end position="253"/>
    </location>
</feature>
<feature type="binding site" evidence="1">
    <location>
        <position position="8"/>
    </location>
    <ligand>
        <name>a divalent metal cation</name>
        <dbReference type="ChEBI" id="CHEBI:60240"/>
    </ligand>
</feature>
<feature type="binding site" evidence="1">
    <location>
        <position position="9"/>
    </location>
    <ligand>
        <name>a divalent metal cation</name>
        <dbReference type="ChEBI" id="CHEBI:60240"/>
    </ligand>
</feature>
<feature type="binding site" evidence="1">
    <location>
        <position position="39"/>
    </location>
    <ligand>
        <name>a divalent metal cation</name>
        <dbReference type="ChEBI" id="CHEBI:60240"/>
    </ligand>
</feature>
<feature type="binding site" evidence="1">
    <location>
        <position position="92"/>
    </location>
    <ligand>
        <name>a divalent metal cation</name>
        <dbReference type="ChEBI" id="CHEBI:60240"/>
    </ligand>
</feature>
<sequence>MRILLSNDDGVHAPGIQTLAKALREFADVQVVAPDRNRSGASNSLTLESSLRTFTFENGDIAVQMGTPTDCVYLGVNALMRPRPDIVVSGINAGPNLGDDVIYSGTVAAAMEGRHLGFPALAVSLDGHKHYDTAAAVTCSILRALCKEPLRTGRILNINVPDLPLDQIKGIRVTRCGSRHPADQVIPQQDPRGNTLYWIGPPGGKCDAGPDTDFAAVDEGYVSITPLHVDLTAHNAQDVVSDWLNSVGVGTQW</sequence>
<proteinExistence type="inferred from homology"/>
<accession>B7LWJ1</accession>
<organism>
    <name type="scientific">Escherichia fergusonii (strain ATCC 35469 / DSM 13698 / CCUG 18766 / IAM 14443 / JCM 21226 / LMG 7866 / NBRC 102419 / NCTC 12128 / CDC 0568-73)</name>
    <dbReference type="NCBI Taxonomy" id="585054"/>
    <lineage>
        <taxon>Bacteria</taxon>
        <taxon>Pseudomonadati</taxon>
        <taxon>Pseudomonadota</taxon>
        <taxon>Gammaproteobacteria</taxon>
        <taxon>Enterobacterales</taxon>
        <taxon>Enterobacteriaceae</taxon>
        <taxon>Escherichia</taxon>
    </lineage>
</organism>
<protein>
    <recommendedName>
        <fullName evidence="1">5'/3'-nucleotidase SurE</fullName>
        <ecNumber evidence="1">3.1.3.5</ecNumber>
        <ecNumber evidence="1">3.1.3.6</ecNumber>
    </recommendedName>
    <alternativeName>
        <fullName evidence="1">Exopolyphosphatase</fullName>
        <ecNumber evidence="1">3.6.1.11</ecNumber>
    </alternativeName>
    <alternativeName>
        <fullName evidence="1">Nucleoside monophosphate phosphohydrolase</fullName>
    </alternativeName>
</protein>
<reference key="1">
    <citation type="journal article" date="2009" name="PLoS Genet.">
        <title>Organised genome dynamics in the Escherichia coli species results in highly diverse adaptive paths.</title>
        <authorList>
            <person name="Touchon M."/>
            <person name="Hoede C."/>
            <person name="Tenaillon O."/>
            <person name="Barbe V."/>
            <person name="Baeriswyl S."/>
            <person name="Bidet P."/>
            <person name="Bingen E."/>
            <person name="Bonacorsi S."/>
            <person name="Bouchier C."/>
            <person name="Bouvet O."/>
            <person name="Calteau A."/>
            <person name="Chiapello H."/>
            <person name="Clermont O."/>
            <person name="Cruveiller S."/>
            <person name="Danchin A."/>
            <person name="Diard M."/>
            <person name="Dossat C."/>
            <person name="Karoui M.E."/>
            <person name="Frapy E."/>
            <person name="Garry L."/>
            <person name="Ghigo J.M."/>
            <person name="Gilles A.M."/>
            <person name="Johnson J."/>
            <person name="Le Bouguenec C."/>
            <person name="Lescat M."/>
            <person name="Mangenot S."/>
            <person name="Martinez-Jehanne V."/>
            <person name="Matic I."/>
            <person name="Nassif X."/>
            <person name="Oztas S."/>
            <person name="Petit M.A."/>
            <person name="Pichon C."/>
            <person name="Rouy Z."/>
            <person name="Ruf C.S."/>
            <person name="Schneider D."/>
            <person name="Tourret J."/>
            <person name="Vacherie B."/>
            <person name="Vallenet D."/>
            <person name="Medigue C."/>
            <person name="Rocha E.P.C."/>
            <person name="Denamur E."/>
        </authorList>
    </citation>
    <scope>NUCLEOTIDE SEQUENCE [LARGE SCALE GENOMIC DNA]</scope>
    <source>
        <strain>ATCC 35469 / DSM 13698 / BCRC 15582 / CCUG 18766 / IAM 14443 / JCM 21226 / LMG 7866 / NBRC 102419 / NCTC 12128 / CDC 0568-73</strain>
    </source>
</reference>
<dbReference type="EC" id="3.1.3.5" evidence="1"/>
<dbReference type="EC" id="3.1.3.6" evidence="1"/>
<dbReference type="EC" id="3.6.1.11" evidence="1"/>
<dbReference type="EMBL" id="CU928158">
    <property type="protein sequence ID" value="CAQ87887.1"/>
    <property type="molecule type" value="Genomic_DNA"/>
</dbReference>
<dbReference type="RefSeq" id="WP_001221544.1">
    <property type="nucleotide sequence ID" value="NC_011740.1"/>
</dbReference>
<dbReference type="SMR" id="B7LWJ1"/>
<dbReference type="GeneID" id="75058604"/>
<dbReference type="KEGG" id="efe:EFER_0324"/>
<dbReference type="HOGENOM" id="CLU_045192_1_2_6"/>
<dbReference type="OrthoDB" id="9780815at2"/>
<dbReference type="Proteomes" id="UP000000745">
    <property type="component" value="Chromosome"/>
</dbReference>
<dbReference type="GO" id="GO:0005737">
    <property type="term" value="C:cytoplasm"/>
    <property type="evidence" value="ECO:0007669"/>
    <property type="project" value="UniProtKB-SubCell"/>
</dbReference>
<dbReference type="GO" id="GO:0008254">
    <property type="term" value="F:3'-nucleotidase activity"/>
    <property type="evidence" value="ECO:0007669"/>
    <property type="project" value="UniProtKB-UniRule"/>
</dbReference>
<dbReference type="GO" id="GO:0008253">
    <property type="term" value="F:5'-nucleotidase activity"/>
    <property type="evidence" value="ECO:0007669"/>
    <property type="project" value="UniProtKB-UniRule"/>
</dbReference>
<dbReference type="GO" id="GO:0004309">
    <property type="term" value="F:exopolyphosphatase activity"/>
    <property type="evidence" value="ECO:0007669"/>
    <property type="project" value="UniProtKB-UniRule"/>
</dbReference>
<dbReference type="GO" id="GO:0046872">
    <property type="term" value="F:metal ion binding"/>
    <property type="evidence" value="ECO:0007669"/>
    <property type="project" value="UniProtKB-UniRule"/>
</dbReference>
<dbReference type="GO" id="GO:0000166">
    <property type="term" value="F:nucleotide binding"/>
    <property type="evidence" value="ECO:0007669"/>
    <property type="project" value="UniProtKB-KW"/>
</dbReference>
<dbReference type="FunFam" id="3.40.1210.10:FF:000001">
    <property type="entry name" value="5'/3'-nucleotidase SurE"/>
    <property type="match status" value="1"/>
</dbReference>
<dbReference type="Gene3D" id="3.40.1210.10">
    <property type="entry name" value="Survival protein SurE-like phosphatase/nucleotidase"/>
    <property type="match status" value="1"/>
</dbReference>
<dbReference type="HAMAP" id="MF_00060">
    <property type="entry name" value="SurE"/>
    <property type="match status" value="1"/>
</dbReference>
<dbReference type="InterPro" id="IPR030048">
    <property type="entry name" value="SurE"/>
</dbReference>
<dbReference type="InterPro" id="IPR002828">
    <property type="entry name" value="SurE-like_Pase/nucleotidase"/>
</dbReference>
<dbReference type="InterPro" id="IPR036523">
    <property type="entry name" value="SurE-like_sf"/>
</dbReference>
<dbReference type="NCBIfam" id="NF001488">
    <property type="entry name" value="PRK00346.1-1"/>
    <property type="match status" value="1"/>
</dbReference>
<dbReference type="NCBIfam" id="NF001489">
    <property type="entry name" value="PRK00346.1-3"/>
    <property type="match status" value="1"/>
</dbReference>
<dbReference type="NCBIfam" id="NF001490">
    <property type="entry name" value="PRK00346.1-4"/>
    <property type="match status" value="1"/>
</dbReference>
<dbReference type="NCBIfam" id="TIGR00087">
    <property type="entry name" value="surE"/>
    <property type="match status" value="1"/>
</dbReference>
<dbReference type="PANTHER" id="PTHR30457">
    <property type="entry name" value="5'-NUCLEOTIDASE SURE"/>
    <property type="match status" value="1"/>
</dbReference>
<dbReference type="PANTHER" id="PTHR30457:SF12">
    <property type="entry name" value="5'_3'-NUCLEOTIDASE SURE"/>
    <property type="match status" value="1"/>
</dbReference>
<dbReference type="Pfam" id="PF01975">
    <property type="entry name" value="SurE"/>
    <property type="match status" value="1"/>
</dbReference>
<dbReference type="SUPFAM" id="SSF64167">
    <property type="entry name" value="SurE-like"/>
    <property type="match status" value="1"/>
</dbReference>
<gene>
    <name evidence="1" type="primary">surE</name>
    <name type="ordered locus">EFER_0324</name>
</gene>
<evidence type="ECO:0000255" key="1">
    <source>
        <dbReference type="HAMAP-Rule" id="MF_00060"/>
    </source>
</evidence>
<name>SURE_ESCF3</name>